<gene>
    <name type="ordered locus">MJ1354</name>
</gene>
<protein>
    <recommendedName>
        <fullName>Uncharacterized protein MJ1354</fullName>
    </recommendedName>
</protein>
<comment type="subcellular location">
    <subcellularLocation>
        <location evidence="2">Cell membrane</location>
        <topology evidence="2">Multi-pass membrane protein</topology>
    </subcellularLocation>
</comment>
<keyword id="KW-1003">Cell membrane</keyword>
<keyword id="KW-0472">Membrane</keyword>
<keyword id="KW-1185">Reference proteome</keyword>
<keyword id="KW-0812">Transmembrane</keyword>
<keyword id="KW-1133">Transmembrane helix</keyword>
<feature type="chain" id="PRO_0000107293" description="Uncharacterized protein MJ1354">
    <location>
        <begin position="1"/>
        <end position="145"/>
    </location>
</feature>
<feature type="transmembrane region" description="Helical" evidence="1">
    <location>
        <begin position="3"/>
        <end position="23"/>
    </location>
</feature>
<feature type="transmembrane region" description="Helical" evidence="1">
    <location>
        <begin position="83"/>
        <end position="103"/>
    </location>
</feature>
<feature type="transmembrane region" description="Helical" evidence="1">
    <location>
        <begin position="105"/>
        <end position="125"/>
    </location>
</feature>
<reference key="1">
    <citation type="journal article" date="1996" name="Science">
        <title>Complete genome sequence of the methanogenic archaeon, Methanococcus jannaschii.</title>
        <authorList>
            <person name="Bult C.J."/>
            <person name="White O."/>
            <person name="Olsen G.J."/>
            <person name="Zhou L."/>
            <person name="Fleischmann R.D."/>
            <person name="Sutton G.G."/>
            <person name="Blake J.A."/>
            <person name="FitzGerald L.M."/>
            <person name="Clayton R.A."/>
            <person name="Gocayne J.D."/>
            <person name="Kerlavage A.R."/>
            <person name="Dougherty B.A."/>
            <person name="Tomb J.-F."/>
            <person name="Adams M.D."/>
            <person name="Reich C.I."/>
            <person name="Overbeek R."/>
            <person name="Kirkness E.F."/>
            <person name="Weinstock K.G."/>
            <person name="Merrick J.M."/>
            <person name="Glodek A."/>
            <person name="Scott J.L."/>
            <person name="Geoghagen N.S.M."/>
            <person name="Weidman J.F."/>
            <person name="Fuhrmann J.L."/>
            <person name="Nguyen D."/>
            <person name="Utterback T.R."/>
            <person name="Kelley J.M."/>
            <person name="Peterson J.D."/>
            <person name="Sadow P.W."/>
            <person name="Hanna M.C."/>
            <person name="Cotton M.D."/>
            <person name="Roberts K.M."/>
            <person name="Hurst M.A."/>
            <person name="Kaine B.P."/>
            <person name="Borodovsky M."/>
            <person name="Klenk H.-P."/>
            <person name="Fraser C.M."/>
            <person name="Smith H.O."/>
            <person name="Woese C.R."/>
            <person name="Venter J.C."/>
        </authorList>
    </citation>
    <scope>NUCLEOTIDE SEQUENCE [LARGE SCALE GENOMIC DNA]</scope>
    <source>
        <strain>ATCC 43067 / DSM 2661 / JAL-1 / JCM 10045 / NBRC 100440</strain>
    </source>
</reference>
<name>Y1354_METJA</name>
<sequence length="145" mass="16713">MDVGIILGILSAMGFLVFLGIGGHILIGYEIIRKISKAYEKGEDVKELENKIINKSHLTNTLEKITTFTLTSIFLFEMEKYRYVIDVGYSILFLVTLTLYLVPNLSLLVWVTFFGATVFMIMLWILRFRAIKEFNKAFIEELTTQ</sequence>
<organism>
    <name type="scientific">Methanocaldococcus jannaschii (strain ATCC 43067 / DSM 2661 / JAL-1 / JCM 10045 / NBRC 100440)</name>
    <name type="common">Methanococcus jannaschii</name>
    <dbReference type="NCBI Taxonomy" id="243232"/>
    <lineage>
        <taxon>Archaea</taxon>
        <taxon>Methanobacteriati</taxon>
        <taxon>Methanobacteriota</taxon>
        <taxon>Methanomada group</taxon>
        <taxon>Methanococci</taxon>
        <taxon>Methanococcales</taxon>
        <taxon>Methanocaldococcaceae</taxon>
        <taxon>Methanocaldococcus</taxon>
    </lineage>
</organism>
<dbReference type="EMBL" id="L77117">
    <property type="protein sequence ID" value="AAB99366.1"/>
    <property type="molecule type" value="Genomic_DNA"/>
</dbReference>
<dbReference type="PIR" id="A64469">
    <property type="entry name" value="A64469"/>
</dbReference>
<dbReference type="RefSeq" id="WP_010870871.1">
    <property type="nucleotide sequence ID" value="NC_000909.1"/>
</dbReference>
<dbReference type="SMR" id="Q58749"/>
<dbReference type="PaxDb" id="243232-MJ_1354"/>
<dbReference type="EnsemblBacteria" id="AAB99366">
    <property type="protein sequence ID" value="AAB99366"/>
    <property type="gene ID" value="MJ_1354"/>
</dbReference>
<dbReference type="GeneID" id="1452256"/>
<dbReference type="KEGG" id="mja:MJ_1354"/>
<dbReference type="eggNOG" id="arCOG09680">
    <property type="taxonomic scope" value="Archaea"/>
</dbReference>
<dbReference type="HOGENOM" id="CLU_1870746_0_0_2"/>
<dbReference type="InParanoid" id="Q58749"/>
<dbReference type="OrthoDB" id="65920at2157"/>
<dbReference type="Proteomes" id="UP000000805">
    <property type="component" value="Chromosome"/>
</dbReference>
<dbReference type="GO" id="GO:0005886">
    <property type="term" value="C:plasma membrane"/>
    <property type="evidence" value="ECO:0007669"/>
    <property type="project" value="UniProtKB-SubCell"/>
</dbReference>
<accession>Q58749</accession>
<proteinExistence type="predicted"/>
<evidence type="ECO:0000255" key="1"/>
<evidence type="ECO:0000305" key="2"/>